<name>MOEH_ANOGA</name>
<organism>
    <name type="scientific">Anopheles gambiae</name>
    <name type="common">African malaria mosquito</name>
    <dbReference type="NCBI Taxonomy" id="7165"/>
    <lineage>
        <taxon>Eukaryota</taxon>
        <taxon>Metazoa</taxon>
        <taxon>Ecdysozoa</taxon>
        <taxon>Arthropoda</taxon>
        <taxon>Hexapoda</taxon>
        <taxon>Insecta</taxon>
        <taxon>Pterygota</taxon>
        <taxon>Neoptera</taxon>
        <taxon>Endopterygota</taxon>
        <taxon>Diptera</taxon>
        <taxon>Nematocera</taxon>
        <taxon>Culicoidea</taxon>
        <taxon>Culicidae</taxon>
        <taxon>Anophelinae</taxon>
        <taxon>Anopheles</taxon>
    </lineage>
</organism>
<evidence type="ECO:0000250" key="1"/>
<evidence type="ECO:0000250" key="2">
    <source>
        <dbReference type="UniProtKB" id="P46150"/>
    </source>
</evidence>
<evidence type="ECO:0000250" key="3">
    <source>
        <dbReference type="UniProtKB" id="Q24564"/>
    </source>
</evidence>
<evidence type="ECO:0000255" key="4">
    <source>
        <dbReference type="PROSITE-ProRule" id="PRU00084"/>
    </source>
</evidence>
<evidence type="ECO:0000256" key="5">
    <source>
        <dbReference type="SAM" id="MobiDB-lite"/>
    </source>
</evidence>
<evidence type="ECO:0000269" key="6">
    <source>
    </source>
</evidence>
<evidence type="ECO:0000303" key="7">
    <source>
    </source>
</evidence>
<reference key="1">
    <citation type="journal article" date="2002" name="Science">
        <title>The genome sequence of the malaria mosquito Anopheles gambiae.</title>
        <authorList>
            <person name="Holt R.A."/>
            <person name="Subramanian G.M."/>
            <person name="Halpern A."/>
            <person name="Sutton G.G."/>
            <person name="Charlab R."/>
            <person name="Nusskern D.R."/>
            <person name="Wincker P."/>
            <person name="Clark A.G."/>
            <person name="Ribeiro J.M.C."/>
            <person name="Wides R."/>
            <person name="Salzberg S.L."/>
            <person name="Loftus B.J."/>
            <person name="Yandell M.D."/>
            <person name="Majoros W.H."/>
            <person name="Rusch D.B."/>
            <person name="Lai Z."/>
            <person name="Kraft C.L."/>
            <person name="Abril J.F."/>
            <person name="Anthouard V."/>
            <person name="Arensburger P."/>
            <person name="Atkinson P.W."/>
            <person name="Baden H."/>
            <person name="de Berardinis V."/>
            <person name="Baldwin D."/>
            <person name="Benes V."/>
            <person name="Biedler J."/>
            <person name="Blass C."/>
            <person name="Bolanos R."/>
            <person name="Boscus D."/>
            <person name="Barnstead M."/>
            <person name="Cai S."/>
            <person name="Center A."/>
            <person name="Chaturverdi K."/>
            <person name="Christophides G.K."/>
            <person name="Chrystal M.A.M."/>
            <person name="Clamp M."/>
            <person name="Cravchik A."/>
            <person name="Curwen V."/>
            <person name="Dana A."/>
            <person name="Delcher A."/>
            <person name="Dew I."/>
            <person name="Evans C.A."/>
            <person name="Flanigan M."/>
            <person name="Grundschober-Freimoser A."/>
            <person name="Friedli L."/>
            <person name="Gu Z."/>
            <person name="Guan P."/>
            <person name="Guigo R."/>
            <person name="Hillenmeyer M.E."/>
            <person name="Hladun S.L."/>
            <person name="Hogan J.R."/>
            <person name="Hong Y.S."/>
            <person name="Hoover J."/>
            <person name="Jaillon O."/>
            <person name="Ke Z."/>
            <person name="Kodira C.D."/>
            <person name="Kokoza E."/>
            <person name="Koutsos A."/>
            <person name="Letunic I."/>
            <person name="Levitsky A.A."/>
            <person name="Liang Y."/>
            <person name="Lin J.-J."/>
            <person name="Lobo N.F."/>
            <person name="Lopez J.R."/>
            <person name="Malek J.A."/>
            <person name="McIntosh T.C."/>
            <person name="Meister S."/>
            <person name="Miller J.R."/>
            <person name="Mobarry C."/>
            <person name="Mongin E."/>
            <person name="Murphy S.D."/>
            <person name="O'Brochta D.A."/>
            <person name="Pfannkoch C."/>
            <person name="Qi R."/>
            <person name="Regier M.A."/>
            <person name="Remington K."/>
            <person name="Shao H."/>
            <person name="Sharakhova M.V."/>
            <person name="Sitter C.D."/>
            <person name="Shetty J."/>
            <person name="Smith T.J."/>
            <person name="Strong R."/>
            <person name="Sun J."/>
            <person name="Thomasova D."/>
            <person name="Ton L.Q."/>
            <person name="Topalis P."/>
            <person name="Tu Z.J."/>
            <person name="Unger M.F."/>
            <person name="Walenz B."/>
            <person name="Wang A.H."/>
            <person name="Wang J."/>
            <person name="Wang M."/>
            <person name="Wang X."/>
            <person name="Woodford K.J."/>
            <person name="Wortman J.R."/>
            <person name="Wu M."/>
            <person name="Yao A."/>
            <person name="Zdobnov E.M."/>
            <person name="Zhang H."/>
            <person name="Zhao Q."/>
            <person name="Zhao S."/>
            <person name="Zhu S.C."/>
            <person name="Zhimulev I."/>
            <person name="Coluzzi M."/>
            <person name="della Torre A."/>
            <person name="Roth C.W."/>
            <person name="Louis C."/>
            <person name="Kalush F."/>
            <person name="Mural R.J."/>
            <person name="Myers E.W."/>
            <person name="Adams M.D."/>
            <person name="Smith H.O."/>
            <person name="Broder S."/>
            <person name="Gardner M.J."/>
            <person name="Fraser C.M."/>
            <person name="Birney E."/>
            <person name="Bork P."/>
            <person name="Brey P.T."/>
            <person name="Venter J.C."/>
            <person name="Weissenbach J."/>
            <person name="Kafatos F.C."/>
            <person name="Collins F.H."/>
            <person name="Hoffman S.L."/>
        </authorList>
    </citation>
    <scope>NUCLEOTIDE SEQUENCE [LARGE SCALE GENOMIC DNA]</scope>
    <source>
        <strain>PEST</strain>
    </source>
</reference>
<comment type="function">
    <text evidence="2">Involved in connections of major cytoskeletal structures to the plasma membrane.</text>
</comment>
<comment type="subunit">
    <text evidence="1">Interacts with cytoskeletal actin.</text>
</comment>
<comment type="subcellular location">
    <subcellularLocation>
        <location evidence="2">Cell junction</location>
        <location evidence="2">Adherens junction</location>
    </subcellularLocation>
    <subcellularLocation>
        <location evidence="2">Cell projection</location>
        <location evidence="2">Microvillus</location>
    </subcellularLocation>
    <subcellularLocation>
        <location evidence="2">Cell projection</location>
        <location evidence="2">Rhabdomere</location>
    </subcellularLocation>
    <subcellularLocation>
        <location evidence="3">Cell membrane</location>
        <topology evidence="3">Peripheral membrane protein</topology>
        <orientation evidence="3">Cytoplasmic side</orientation>
    </subcellularLocation>
    <subcellularLocation>
        <location evidence="3">Cytoplasm</location>
        <location evidence="3">Cytoskeleton</location>
    </subcellularLocation>
</comment>
<comment type="alternative products">
    <event type="alternative splicing"/>
    <isoform>
        <id>Q7PS12-1</id>
        <name evidence="6">C</name>
        <sequence type="displayed"/>
    </isoform>
    <isoform>
        <id>Q7PS12-2</id>
        <name evidence="6">A</name>
        <sequence type="described" ref="VSP_042863"/>
    </isoform>
    <isoform>
        <id>Q7PS12-3</id>
        <name evidence="6">B</name>
        <sequence type="described" ref="VSP_042864"/>
    </isoform>
</comment>
<feature type="chain" id="PRO_0000355093" description="Moesin/ezrin/radixin homolog 1">
    <location>
        <begin position="1"/>
        <end position="581"/>
    </location>
</feature>
<feature type="domain" description="FERM" evidence="4">
    <location>
        <begin position="8"/>
        <end position="298"/>
    </location>
</feature>
<feature type="region of interest" description="Disordered" evidence="5">
    <location>
        <begin position="452"/>
        <end position="519"/>
    </location>
</feature>
<feature type="compositionally biased region" description="Low complexity" evidence="5">
    <location>
        <begin position="459"/>
        <end position="469"/>
    </location>
</feature>
<feature type="compositionally biased region" description="Acidic residues" evidence="5">
    <location>
        <begin position="477"/>
        <end position="486"/>
    </location>
</feature>
<feature type="compositionally biased region" description="Basic and acidic residues" evidence="5">
    <location>
        <begin position="495"/>
        <end position="519"/>
    </location>
</feature>
<feature type="modified residue" description="Phosphothreonine" evidence="2">
    <location>
        <position position="562"/>
    </location>
</feature>
<feature type="splice variant" id="VSP_042863" description="In isoform A." evidence="7">
    <original>MVASSKM</original>
    <variation>MPKS</variation>
    <location>
        <begin position="1"/>
        <end position="7"/>
    </location>
</feature>
<feature type="splice variant" id="VSP_042864" description="In isoform B." evidence="7">
    <location>
        <begin position="453"/>
        <end position="458"/>
    </location>
</feature>
<sequence>MVASSKMMNVRVTTMDAELEFAIQQGTTGKQLFDQVVKTIGLREVWFFGLQYTDSKGDNTWIKLYKKVMSQDVQKGDPLLFKFRAKFYPEDVAEELIQDITLRLFYLQVKNAILSDEIYCPPETSVLLASYAVQARHGDYNKGTHVPGFLAKDRLLPQRVIDQHKMSKDEWENSITTWWQEHRGLLREDAMMEYLKIAQDLEMYGVNYFEIRNKKGTELWLGVDALGLNIYEKEDRLTPKIGFPWSEIRNISFNDRKFIIKPIDKKAPDFVFFAPRVRINKRILALCMGNHELYMRRRKPDTIDVQQMKAQARDEKNAKQQEREKLQLALAARERAEKKQQEYEDRLRSMQEEMERKQANLSEAQDTIRRLQEQLNQVQAAKEELEQRQNELHEMMQRLEETKNMEATERAKLEEEIRVKQLEMQKIQEEVTLKDSETKRLHEEVEEAIRKQVAKGSRAAAALQAATTTPKHHHVEEEEENEEELINGENGTQDFSKDFDTDEHIKDPVEERRTLAERNERLQDQLKALKQDLALSRDDTMETPNDKIHRENVRQGRDKYKTLREIRKGNTKRRVDQFENM</sequence>
<gene>
    <name evidence="2" type="primary">Moe</name>
    <name type="ORF">AGAP000562</name>
</gene>
<protein>
    <recommendedName>
        <fullName evidence="2">Moesin/ezrin/radixin homolog 1</fullName>
    </recommendedName>
</protein>
<dbReference type="EMBL" id="AAAB01008846">
    <property type="protein sequence ID" value="EAA06305.6"/>
    <property type="molecule type" value="Genomic_DNA"/>
</dbReference>
<dbReference type="EMBL" id="AAAB01008846">
    <property type="protein sequence ID" value="EGK96417.1"/>
    <property type="molecule type" value="Genomic_DNA"/>
</dbReference>
<dbReference type="EMBL" id="AAAB01008846">
    <property type="protein sequence ID" value="EGK96418.1"/>
    <property type="molecule type" value="Genomic_DNA"/>
</dbReference>
<dbReference type="RefSeq" id="XP_003437028.1">
    <property type="nucleotide sequence ID" value="XM_003436980.1"/>
</dbReference>
<dbReference type="RefSeq" id="XP_003437029.1">
    <property type="nucleotide sequence ID" value="XM_003436981.1"/>
</dbReference>
<dbReference type="RefSeq" id="XP_310518.5">
    <property type="nucleotide sequence ID" value="XM_310518.5"/>
</dbReference>
<dbReference type="SMR" id="Q7PS12"/>
<dbReference type="FunCoup" id="Q7PS12">
    <property type="interactions" value="844"/>
</dbReference>
<dbReference type="STRING" id="7165.Q7PS12"/>
<dbReference type="PaxDb" id="7165-AGAP000562-PC"/>
<dbReference type="VEuPathDB" id="VectorBase:AGAMI1_010223"/>
<dbReference type="VEuPathDB" id="VectorBase:AGAP000562"/>
<dbReference type="eggNOG" id="KOG3529">
    <property type="taxonomic scope" value="Eukaryota"/>
</dbReference>
<dbReference type="InParanoid" id="Q7PS12"/>
<dbReference type="OMA" id="DMKTQET"/>
<dbReference type="PhylomeDB" id="Q7PS12"/>
<dbReference type="Proteomes" id="UP000007062">
    <property type="component" value="Chromosome X"/>
</dbReference>
<dbReference type="GO" id="GO:0005912">
    <property type="term" value="C:adherens junction"/>
    <property type="evidence" value="ECO:0000250"/>
    <property type="project" value="UniProtKB"/>
</dbReference>
<dbReference type="GO" id="GO:0045177">
    <property type="term" value="C:apical part of cell"/>
    <property type="evidence" value="ECO:0000318"/>
    <property type="project" value="GO_Central"/>
</dbReference>
<dbReference type="GO" id="GO:0005737">
    <property type="term" value="C:cytoplasm"/>
    <property type="evidence" value="ECO:0007669"/>
    <property type="project" value="UniProtKB-KW"/>
</dbReference>
<dbReference type="GO" id="GO:0005856">
    <property type="term" value="C:cytoskeleton"/>
    <property type="evidence" value="ECO:0007669"/>
    <property type="project" value="UniProtKB-SubCell"/>
</dbReference>
<dbReference type="GO" id="GO:0030175">
    <property type="term" value="C:filopodium"/>
    <property type="evidence" value="ECO:0000318"/>
    <property type="project" value="GO_Central"/>
</dbReference>
<dbReference type="GO" id="GO:0005902">
    <property type="term" value="C:microvillus"/>
    <property type="evidence" value="ECO:0000318"/>
    <property type="project" value="GO_Central"/>
</dbReference>
<dbReference type="GO" id="GO:0005886">
    <property type="term" value="C:plasma membrane"/>
    <property type="evidence" value="ECO:0000318"/>
    <property type="project" value="GO_Central"/>
</dbReference>
<dbReference type="GO" id="GO:0016028">
    <property type="term" value="C:rhabdomere"/>
    <property type="evidence" value="ECO:0007669"/>
    <property type="project" value="UniProtKB-SubCell"/>
</dbReference>
<dbReference type="GO" id="GO:0003779">
    <property type="term" value="F:actin binding"/>
    <property type="evidence" value="ECO:0000250"/>
    <property type="project" value="UniProtKB"/>
</dbReference>
<dbReference type="GO" id="GO:0050839">
    <property type="term" value="F:cell adhesion molecule binding"/>
    <property type="evidence" value="ECO:0000318"/>
    <property type="project" value="GO_Central"/>
</dbReference>
<dbReference type="GO" id="GO:0009887">
    <property type="term" value="P:animal organ morphogenesis"/>
    <property type="evidence" value="ECO:0007669"/>
    <property type="project" value="UniProtKB-ARBA"/>
</dbReference>
<dbReference type="GO" id="GO:0045197">
    <property type="term" value="P:establishment or maintenance of epithelial cell apical/basal polarity"/>
    <property type="evidence" value="ECO:0000250"/>
    <property type="project" value="UniProtKB"/>
</dbReference>
<dbReference type="GO" id="GO:0030182">
    <property type="term" value="P:neuron differentiation"/>
    <property type="evidence" value="ECO:0007669"/>
    <property type="project" value="UniProtKB-ARBA"/>
</dbReference>
<dbReference type="GO" id="GO:2000643">
    <property type="term" value="P:positive regulation of early endosome to late endosome transport"/>
    <property type="evidence" value="ECO:0000318"/>
    <property type="project" value="GO_Central"/>
</dbReference>
<dbReference type="GO" id="GO:1902966">
    <property type="term" value="P:positive regulation of protein localization to early endosome"/>
    <property type="evidence" value="ECO:0000318"/>
    <property type="project" value="GO_Central"/>
</dbReference>
<dbReference type="GO" id="GO:0008360">
    <property type="term" value="P:regulation of cell shape"/>
    <property type="evidence" value="ECO:0000318"/>
    <property type="project" value="GO_Central"/>
</dbReference>
<dbReference type="GO" id="GO:1902115">
    <property type="term" value="P:regulation of organelle assembly"/>
    <property type="evidence" value="ECO:0000318"/>
    <property type="project" value="GO_Central"/>
</dbReference>
<dbReference type="CDD" id="cd14473">
    <property type="entry name" value="FERM_B-lobe"/>
    <property type="match status" value="1"/>
</dbReference>
<dbReference type="CDD" id="cd13194">
    <property type="entry name" value="FERM_C_ERM"/>
    <property type="match status" value="1"/>
</dbReference>
<dbReference type="CDD" id="cd17187">
    <property type="entry name" value="FERM_F1_ERM"/>
    <property type="match status" value="1"/>
</dbReference>
<dbReference type="FunFam" id="2.30.29.30:FF:000003">
    <property type="entry name" value="Radixin isoform 1"/>
    <property type="match status" value="1"/>
</dbReference>
<dbReference type="FunFam" id="1.20.80.10:FF:000002">
    <property type="entry name" value="radixin isoform X1"/>
    <property type="match status" value="1"/>
</dbReference>
<dbReference type="FunFam" id="3.10.20.90:FF:000013">
    <property type="entry name" value="radixin isoform X1"/>
    <property type="match status" value="1"/>
</dbReference>
<dbReference type="FunFam" id="1.20.5.450:FF:000001">
    <property type="entry name" value="radixin isoform X2"/>
    <property type="match status" value="1"/>
</dbReference>
<dbReference type="Gene3D" id="1.20.5.450">
    <property type="match status" value="1"/>
</dbReference>
<dbReference type="Gene3D" id="1.20.80.10">
    <property type="match status" value="1"/>
</dbReference>
<dbReference type="Gene3D" id="6.10.360.10">
    <property type="match status" value="1"/>
</dbReference>
<dbReference type="Gene3D" id="3.10.20.90">
    <property type="entry name" value="Phosphatidylinositol 3-kinase Catalytic Subunit, Chain A, domain 1"/>
    <property type="match status" value="1"/>
</dbReference>
<dbReference type="Gene3D" id="2.30.29.30">
    <property type="entry name" value="Pleckstrin-homology domain (PH domain)/Phosphotyrosine-binding domain (PTB)"/>
    <property type="match status" value="1"/>
</dbReference>
<dbReference type="InterPro" id="IPR019749">
    <property type="entry name" value="Band_41_domain"/>
</dbReference>
<dbReference type="InterPro" id="IPR011174">
    <property type="entry name" value="ERM"/>
</dbReference>
<dbReference type="InterPro" id="IPR011259">
    <property type="entry name" value="ERM_C_dom"/>
</dbReference>
<dbReference type="InterPro" id="IPR041789">
    <property type="entry name" value="ERM_FERM_C"/>
</dbReference>
<dbReference type="InterPro" id="IPR046810">
    <property type="entry name" value="ERM_helical"/>
</dbReference>
<dbReference type="InterPro" id="IPR000798">
    <property type="entry name" value="Ez/rad/moesin-like"/>
</dbReference>
<dbReference type="InterPro" id="IPR014352">
    <property type="entry name" value="FERM/acyl-CoA-bd_prot_sf"/>
</dbReference>
<dbReference type="InterPro" id="IPR035963">
    <property type="entry name" value="FERM_2"/>
</dbReference>
<dbReference type="InterPro" id="IPR019748">
    <property type="entry name" value="FERM_central"/>
</dbReference>
<dbReference type="InterPro" id="IPR019747">
    <property type="entry name" value="FERM_CS"/>
</dbReference>
<dbReference type="InterPro" id="IPR000299">
    <property type="entry name" value="FERM_domain"/>
</dbReference>
<dbReference type="InterPro" id="IPR018979">
    <property type="entry name" value="FERM_N"/>
</dbReference>
<dbReference type="InterPro" id="IPR018980">
    <property type="entry name" value="FERM_PH-like_C"/>
</dbReference>
<dbReference type="InterPro" id="IPR008954">
    <property type="entry name" value="Moesin_tail_sf"/>
</dbReference>
<dbReference type="InterPro" id="IPR011993">
    <property type="entry name" value="PH-like_dom_sf"/>
</dbReference>
<dbReference type="InterPro" id="IPR029071">
    <property type="entry name" value="Ubiquitin-like_domsf"/>
</dbReference>
<dbReference type="PANTHER" id="PTHR23281">
    <property type="entry name" value="MERLIN/MOESIN/EZRIN/RADIXIN"/>
    <property type="match status" value="1"/>
</dbReference>
<dbReference type="Pfam" id="PF00769">
    <property type="entry name" value="ERM_C"/>
    <property type="match status" value="1"/>
</dbReference>
<dbReference type="Pfam" id="PF20492">
    <property type="entry name" value="ERM_helical"/>
    <property type="match status" value="1"/>
</dbReference>
<dbReference type="Pfam" id="PF09380">
    <property type="entry name" value="FERM_C"/>
    <property type="match status" value="1"/>
</dbReference>
<dbReference type="Pfam" id="PF00373">
    <property type="entry name" value="FERM_M"/>
    <property type="match status" value="1"/>
</dbReference>
<dbReference type="Pfam" id="PF09379">
    <property type="entry name" value="FERM_N"/>
    <property type="match status" value="1"/>
</dbReference>
<dbReference type="PIRSF" id="PIRSF002305">
    <property type="entry name" value="ERM"/>
    <property type="match status" value="1"/>
</dbReference>
<dbReference type="PRINTS" id="PR00935">
    <property type="entry name" value="BAND41"/>
</dbReference>
<dbReference type="PRINTS" id="PR00661">
    <property type="entry name" value="ERMFAMILY"/>
</dbReference>
<dbReference type="SMART" id="SM00295">
    <property type="entry name" value="B41"/>
    <property type="match status" value="1"/>
</dbReference>
<dbReference type="SMART" id="SM01196">
    <property type="entry name" value="FERM_C"/>
    <property type="match status" value="1"/>
</dbReference>
<dbReference type="SUPFAM" id="SSF48678">
    <property type="entry name" value="Moesin tail domain"/>
    <property type="match status" value="1"/>
</dbReference>
<dbReference type="SUPFAM" id="SSF50729">
    <property type="entry name" value="PH domain-like"/>
    <property type="match status" value="1"/>
</dbReference>
<dbReference type="SUPFAM" id="SSF47031">
    <property type="entry name" value="Second domain of FERM"/>
    <property type="match status" value="1"/>
</dbReference>
<dbReference type="SUPFAM" id="SSF54236">
    <property type="entry name" value="Ubiquitin-like"/>
    <property type="match status" value="1"/>
</dbReference>
<dbReference type="PROSITE" id="PS00660">
    <property type="entry name" value="FERM_1"/>
    <property type="match status" value="1"/>
</dbReference>
<dbReference type="PROSITE" id="PS00661">
    <property type="entry name" value="FERM_2"/>
    <property type="match status" value="1"/>
</dbReference>
<dbReference type="PROSITE" id="PS50057">
    <property type="entry name" value="FERM_3"/>
    <property type="match status" value="1"/>
</dbReference>
<accession>Q7PS12</accession>
<accession>F5HJF6</accession>
<accession>F5HJF7</accession>
<keyword id="KW-0009">Actin-binding</keyword>
<keyword id="KW-0025">Alternative splicing</keyword>
<keyword id="KW-0965">Cell junction</keyword>
<keyword id="KW-1003">Cell membrane</keyword>
<keyword id="KW-0966">Cell projection</keyword>
<keyword id="KW-0963">Cytoplasm</keyword>
<keyword id="KW-0206">Cytoskeleton</keyword>
<keyword id="KW-0472">Membrane</keyword>
<keyword id="KW-0597">Phosphoprotein</keyword>
<keyword id="KW-1185">Reference proteome</keyword>
<proteinExistence type="inferred from homology"/>